<name>CCME_SHEB2</name>
<proteinExistence type="inferred from homology"/>
<gene>
    <name evidence="1" type="primary">ccmE</name>
    <name evidence="1" type="synonym">cycJ</name>
    <name type="ordered locus">Sbal223_4028</name>
</gene>
<comment type="function">
    <text evidence="1">Heme chaperone required for the biogenesis of c-type cytochromes. Transiently binds heme delivered by CcmC and transfers the heme to apo-cytochromes in a process facilitated by CcmF and CcmH.</text>
</comment>
<comment type="subcellular location">
    <subcellularLocation>
        <location evidence="1">Cell inner membrane</location>
        <topology evidence="1">Single-pass type II membrane protein</topology>
        <orientation evidence="1">Periplasmic side</orientation>
    </subcellularLocation>
</comment>
<comment type="similarity">
    <text evidence="1">Belongs to the CcmE/CycJ family.</text>
</comment>
<protein>
    <recommendedName>
        <fullName evidence="1">Cytochrome c-type biogenesis protein CcmE</fullName>
    </recommendedName>
    <alternativeName>
        <fullName evidence="1">Cytochrome c maturation protein E</fullName>
    </alternativeName>
    <alternativeName>
        <fullName evidence="1">Heme chaperone CcmE</fullName>
    </alternativeName>
</protein>
<organism>
    <name type="scientific">Shewanella baltica (strain OS223)</name>
    <dbReference type="NCBI Taxonomy" id="407976"/>
    <lineage>
        <taxon>Bacteria</taxon>
        <taxon>Pseudomonadati</taxon>
        <taxon>Pseudomonadota</taxon>
        <taxon>Gammaproteobacteria</taxon>
        <taxon>Alteromonadales</taxon>
        <taxon>Shewanellaceae</taxon>
        <taxon>Shewanella</taxon>
    </lineage>
</organism>
<accession>B8EBH7</accession>
<feature type="chain" id="PRO_1000189050" description="Cytochrome c-type biogenesis protein CcmE">
    <location>
        <begin position="1"/>
        <end position="162"/>
    </location>
</feature>
<feature type="topological domain" description="Cytoplasmic" evidence="1">
    <location>
        <begin position="1"/>
        <end position="8"/>
    </location>
</feature>
<feature type="transmembrane region" description="Helical; Signal-anchor for type II membrane protein" evidence="1">
    <location>
        <begin position="9"/>
        <end position="29"/>
    </location>
</feature>
<feature type="topological domain" description="Periplasmic" evidence="1">
    <location>
        <begin position="30"/>
        <end position="162"/>
    </location>
</feature>
<feature type="region of interest" description="Disordered" evidence="2">
    <location>
        <begin position="142"/>
        <end position="162"/>
    </location>
</feature>
<feature type="compositionally biased region" description="Polar residues" evidence="2">
    <location>
        <begin position="153"/>
        <end position="162"/>
    </location>
</feature>
<feature type="binding site" description="covalent" evidence="1">
    <location>
        <position position="131"/>
    </location>
    <ligand>
        <name>heme</name>
        <dbReference type="ChEBI" id="CHEBI:30413"/>
    </ligand>
</feature>
<feature type="binding site" description="axial binding residue" evidence="1">
    <location>
        <position position="135"/>
    </location>
    <ligand>
        <name>heme</name>
        <dbReference type="ChEBI" id="CHEBI:30413"/>
    </ligand>
    <ligandPart>
        <name>Fe</name>
        <dbReference type="ChEBI" id="CHEBI:18248"/>
    </ligandPart>
</feature>
<reference key="1">
    <citation type="submission" date="2008-12" db="EMBL/GenBank/DDBJ databases">
        <title>Complete sequence of chromosome of Shewanella baltica OS223.</title>
        <authorList>
            <consortium name="US DOE Joint Genome Institute"/>
            <person name="Lucas S."/>
            <person name="Copeland A."/>
            <person name="Lapidus A."/>
            <person name="Glavina del Rio T."/>
            <person name="Dalin E."/>
            <person name="Tice H."/>
            <person name="Bruce D."/>
            <person name="Goodwin L."/>
            <person name="Pitluck S."/>
            <person name="Chertkov O."/>
            <person name="Meincke L."/>
            <person name="Brettin T."/>
            <person name="Detter J.C."/>
            <person name="Han C."/>
            <person name="Kuske C.R."/>
            <person name="Larimer F."/>
            <person name="Land M."/>
            <person name="Hauser L."/>
            <person name="Kyrpides N."/>
            <person name="Ovchinnikova G."/>
            <person name="Brettar I."/>
            <person name="Rodrigues J."/>
            <person name="Konstantinidis K."/>
            <person name="Tiedje J."/>
        </authorList>
    </citation>
    <scope>NUCLEOTIDE SEQUENCE [LARGE SCALE GENOMIC DNA]</scope>
    <source>
        <strain>OS223</strain>
    </source>
</reference>
<dbReference type="EMBL" id="CP001252">
    <property type="protein sequence ID" value="ACK48501.1"/>
    <property type="molecule type" value="Genomic_DNA"/>
</dbReference>
<dbReference type="RefSeq" id="WP_006079699.1">
    <property type="nucleotide sequence ID" value="NC_011663.1"/>
</dbReference>
<dbReference type="SMR" id="B8EBH7"/>
<dbReference type="GeneID" id="11770582"/>
<dbReference type="KEGG" id="sbp:Sbal223_4028"/>
<dbReference type="HOGENOM" id="CLU_079503_1_0_6"/>
<dbReference type="Proteomes" id="UP000002507">
    <property type="component" value="Chromosome"/>
</dbReference>
<dbReference type="GO" id="GO:0005886">
    <property type="term" value="C:plasma membrane"/>
    <property type="evidence" value="ECO:0007669"/>
    <property type="project" value="UniProtKB-SubCell"/>
</dbReference>
<dbReference type="GO" id="GO:0020037">
    <property type="term" value="F:heme binding"/>
    <property type="evidence" value="ECO:0007669"/>
    <property type="project" value="InterPro"/>
</dbReference>
<dbReference type="GO" id="GO:0046872">
    <property type="term" value="F:metal ion binding"/>
    <property type="evidence" value="ECO:0007669"/>
    <property type="project" value="UniProtKB-KW"/>
</dbReference>
<dbReference type="GO" id="GO:0017004">
    <property type="term" value="P:cytochrome complex assembly"/>
    <property type="evidence" value="ECO:0007669"/>
    <property type="project" value="UniProtKB-KW"/>
</dbReference>
<dbReference type="FunFam" id="2.40.50.140:FF:000104">
    <property type="entry name" value="Cytochrome c-type biogenesis protein CcmE"/>
    <property type="match status" value="1"/>
</dbReference>
<dbReference type="Gene3D" id="2.40.50.140">
    <property type="entry name" value="Nucleic acid-binding proteins"/>
    <property type="match status" value="1"/>
</dbReference>
<dbReference type="HAMAP" id="MF_01959">
    <property type="entry name" value="CcmE"/>
    <property type="match status" value="1"/>
</dbReference>
<dbReference type="InterPro" id="IPR004329">
    <property type="entry name" value="CcmE"/>
</dbReference>
<dbReference type="InterPro" id="IPR036127">
    <property type="entry name" value="CcmE-like_sf"/>
</dbReference>
<dbReference type="InterPro" id="IPR012340">
    <property type="entry name" value="NA-bd_OB-fold"/>
</dbReference>
<dbReference type="NCBIfam" id="NF009638">
    <property type="entry name" value="PRK13165.1"/>
    <property type="match status" value="1"/>
</dbReference>
<dbReference type="NCBIfam" id="NF009729">
    <property type="entry name" value="PRK13254.1-3"/>
    <property type="match status" value="1"/>
</dbReference>
<dbReference type="PANTHER" id="PTHR34128">
    <property type="entry name" value="CYTOCHROME C-TYPE BIOGENESIS PROTEIN CCME HOMOLOG, MITOCHONDRIAL"/>
    <property type="match status" value="1"/>
</dbReference>
<dbReference type="PANTHER" id="PTHR34128:SF2">
    <property type="entry name" value="CYTOCHROME C-TYPE BIOGENESIS PROTEIN CCME HOMOLOG, MITOCHONDRIAL"/>
    <property type="match status" value="1"/>
</dbReference>
<dbReference type="Pfam" id="PF03100">
    <property type="entry name" value="CcmE"/>
    <property type="match status" value="1"/>
</dbReference>
<dbReference type="SUPFAM" id="SSF82093">
    <property type="entry name" value="Heme chaperone CcmE"/>
    <property type="match status" value="1"/>
</dbReference>
<evidence type="ECO:0000255" key="1">
    <source>
        <dbReference type="HAMAP-Rule" id="MF_01959"/>
    </source>
</evidence>
<evidence type="ECO:0000256" key="2">
    <source>
        <dbReference type="SAM" id="MobiDB-lite"/>
    </source>
</evidence>
<sequence>MNPRRKKRLTLAVALIGGVAAITSLLLYALNSNLNLFYTPSEIVHGKTDTGVKPEIGQRIRVGGMVTVGSMVRDPKSLHVQFAVHDSLGGEVLVTYDDLLPDLFREGQGIVAQGVLSADGKLEATEVLAKHDENYMPPEVAEAMGQKHEKLDYSQQKAPDTK</sequence>
<keyword id="KW-0997">Cell inner membrane</keyword>
<keyword id="KW-1003">Cell membrane</keyword>
<keyword id="KW-0201">Cytochrome c-type biogenesis</keyword>
<keyword id="KW-0349">Heme</keyword>
<keyword id="KW-0408">Iron</keyword>
<keyword id="KW-0472">Membrane</keyword>
<keyword id="KW-0479">Metal-binding</keyword>
<keyword id="KW-0735">Signal-anchor</keyword>
<keyword id="KW-0812">Transmembrane</keyword>
<keyword id="KW-1133">Transmembrane helix</keyword>